<sequence>MNMNKIALVYNENSKSSSSIEEIKKLYTYCDVEDADVIMVAGGDGELLHNIHRYMHLNIPFYGVNLGSLGFLMNPLDIKNILQNIQESTASTLNPLLMQAEDVDGQIHKALAINEVSIFRKTNQAAKFRIEVNGVERMSELVADGALVATPAGSSAYNLSAGGHILPLESNMLCLTPICSFRPRRWHGALLPSSASIKFEILNTNKRPVNATADFQEFSNIKSVTIKSTNDKSIKLLFNKNHTLEDRIIKEQFGG</sequence>
<protein>
    <recommendedName>
        <fullName evidence="1">NAD kinase</fullName>
        <ecNumber evidence="1">2.7.1.23</ecNumber>
    </recommendedName>
    <alternativeName>
        <fullName evidence="1">ATP-dependent NAD kinase</fullName>
    </alternativeName>
</protein>
<proteinExistence type="inferred from homology"/>
<comment type="function">
    <text evidence="1">Involved in the regulation of the intracellular balance of NAD and NADP, and is a key enzyme in the biosynthesis of NADP. Catalyzes specifically the phosphorylation on 2'-hydroxyl of the adenosine moiety of NAD to yield NADP.</text>
</comment>
<comment type="catalytic activity">
    <reaction evidence="1">
        <text>NAD(+) + ATP = ADP + NADP(+) + H(+)</text>
        <dbReference type="Rhea" id="RHEA:18629"/>
        <dbReference type="ChEBI" id="CHEBI:15378"/>
        <dbReference type="ChEBI" id="CHEBI:30616"/>
        <dbReference type="ChEBI" id="CHEBI:57540"/>
        <dbReference type="ChEBI" id="CHEBI:58349"/>
        <dbReference type="ChEBI" id="CHEBI:456216"/>
        <dbReference type="EC" id="2.7.1.23"/>
    </reaction>
</comment>
<comment type="cofactor">
    <cofactor evidence="1">
        <name>a divalent metal cation</name>
        <dbReference type="ChEBI" id="CHEBI:60240"/>
    </cofactor>
</comment>
<comment type="subcellular location">
    <subcellularLocation>
        <location evidence="1">Cytoplasm</location>
    </subcellularLocation>
</comment>
<comment type="similarity">
    <text evidence="1">Belongs to the NAD kinase family.</text>
</comment>
<name>NADK_RICB8</name>
<dbReference type="EC" id="2.7.1.23" evidence="1"/>
<dbReference type="EMBL" id="CP000849">
    <property type="protein sequence ID" value="ABV78604.1"/>
    <property type="molecule type" value="Genomic_DNA"/>
</dbReference>
<dbReference type="RefSeq" id="WP_012151570.1">
    <property type="nucleotide sequence ID" value="NC_009883.1"/>
</dbReference>
<dbReference type="SMR" id="A8GUT7"/>
<dbReference type="KEGG" id="rbo:A1I_01030"/>
<dbReference type="HOGENOM" id="CLU_073319_0_0_5"/>
<dbReference type="GO" id="GO:0005737">
    <property type="term" value="C:cytoplasm"/>
    <property type="evidence" value="ECO:0007669"/>
    <property type="project" value="UniProtKB-SubCell"/>
</dbReference>
<dbReference type="GO" id="GO:0005524">
    <property type="term" value="F:ATP binding"/>
    <property type="evidence" value="ECO:0007669"/>
    <property type="project" value="UniProtKB-KW"/>
</dbReference>
<dbReference type="GO" id="GO:0046872">
    <property type="term" value="F:metal ion binding"/>
    <property type="evidence" value="ECO:0007669"/>
    <property type="project" value="UniProtKB-UniRule"/>
</dbReference>
<dbReference type="GO" id="GO:0051287">
    <property type="term" value="F:NAD binding"/>
    <property type="evidence" value="ECO:0007669"/>
    <property type="project" value="UniProtKB-ARBA"/>
</dbReference>
<dbReference type="GO" id="GO:0003951">
    <property type="term" value="F:NAD+ kinase activity"/>
    <property type="evidence" value="ECO:0007669"/>
    <property type="project" value="UniProtKB-UniRule"/>
</dbReference>
<dbReference type="GO" id="GO:0019674">
    <property type="term" value="P:NAD metabolic process"/>
    <property type="evidence" value="ECO:0007669"/>
    <property type="project" value="InterPro"/>
</dbReference>
<dbReference type="GO" id="GO:0006741">
    <property type="term" value="P:NADP biosynthetic process"/>
    <property type="evidence" value="ECO:0007669"/>
    <property type="project" value="UniProtKB-UniRule"/>
</dbReference>
<dbReference type="Gene3D" id="3.40.50.10330">
    <property type="entry name" value="Probable inorganic polyphosphate/atp-NAD kinase, domain 1"/>
    <property type="match status" value="1"/>
</dbReference>
<dbReference type="Gene3D" id="2.60.200.30">
    <property type="entry name" value="Probable inorganic polyphosphate/atp-NAD kinase, domain 2"/>
    <property type="match status" value="1"/>
</dbReference>
<dbReference type="HAMAP" id="MF_00361">
    <property type="entry name" value="NAD_kinase"/>
    <property type="match status" value="1"/>
</dbReference>
<dbReference type="InterPro" id="IPR017438">
    <property type="entry name" value="ATP-NAD_kinase_N"/>
</dbReference>
<dbReference type="InterPro" id="IPR017437">
    <property type="entry name" value="ATP-NAD_kinase_PpnK-typ_C"/>
</dbReference>
<dbReference type="InterPro" id="IPR016064">
    <property type="entry name" value="NAD/diacylglycerol_kinase_sf"/>
</dbReference>
<dbReference type="InterPro" id="IPR002504">
    <property type="entry name" value="NADK"/>
</dbReference>
<dbReference type="NCBIfam" id="NF003406">
    <property type="entry name" value="PRK04761.1"/>
    <property type="match status" value="1"/>
</dbReference>
<dbReference type="PANTHER" id="PTHR20275">
    <property type="entry name" value="NAD KINASE"/>
    <property type="match status" value="1"/>
</dbReference>
<dbReference type="PANTHER" id="PTHR20275:SF0">
    <property type="entry name" value="NAD KINASE"/>
    <property type="match status" value="1"/>
</dbReference>
<dbReference type="Pfam" id="PF01513">
    <property type="entry name" value="NAD_kinase"/>
    <property type="match status" value="1"/>
</dbReference>
<dbReference type="Pfam" id="PF20143">
    <property type="entry name" value="NAD_kinase_C"/>
    <property type="match status" value="1"/>
</dbReference>
<dbReference type="SUPFAM" id="SSF111331">
    <property type="entry name" value="NAD kinase/diacylglycerol kinase-like"/>
    <property type="match status" value="1"/>
</dbReference>
<evidence type="ECO:0000255" key="1">
    <source>
        <dbReference type="HAMAP-Rule" id="MF_00361"/>
    </source>
</evidence>
<feature type="chain" id="PRO_1000005439" description="NAD kinase">
    <location>
        <begin position="1"/>
        <end position="255"/>
    </location>
</feature>
<feature type="active site" description="Proton acceptor" evidence="1">
    <location>
        <position position="44"/>
    </location>
</feature>
<feature type="binding site" evidence="1">
    <location>
        <begin position="44"/>
        <end position="45"/>
    </location>
    <ligand>
        <name>NAD(+)</name>
        <dbReference type="ChEBI" id="CHEBI:57540"/>
    </ligand>
</feature>
<feature type="binding site" evidence="1">
    <location>
        <position position="49"/>
    </location>
    <ligand>
        <name>NAD(+)</name>
        <dbReference type="ChEBI" id="CHEBI:57540"/>
    </ligand>
</feature>
<feature type="binding site" evidence="1">
    <location>
        <begin position="114"/>
        <end position="115"/>
    </location>
    <ligand>
        <name>NAD(+)</name>
        <dbReference type="ChEBI" id="CHEBI:57540"/>
    </ligand>
</feature>
<feature type="binding site" evidence="1">
    <location>
        <position position="144"/>
    </location>
    <ligand>
        <name>NAD(+)</name>
        <dbReference type="ChEBI" id="CHEBI:57540"/>
    </ligand>
</feature>
<feature type="binding site" evidence="1">
    <location>
        <position position="152"/>
    </location>
    <ligand>
        <name>NAD(+)</name>
        <dbReference type="ChEBI" id="CHEBI:57540"/>
    </ligand>
</feature>
<feature type="binding site" evidence="1">
    <location>
        <begin position="155"/>
        <end position="160"/>
    </location>
    <ligand>
        <name>NAD(+)</name>
        <dbReference type="ChEBI" id="CHEBI:57540"/>
    </ligand>
</feature>
<feature type="binding site" evidence="1">
    <location>
        <position position="216"/>
    </location>
    <ligand>
        <name>NAD(+)</name>
        <dbReference type="ChEBI" id="CHEBI:57540"/>
    </ligand>
</feature>
<organism>
    <name type="scientific">Rickettsia bellii (strain OSU 85-389)</name>
    <dbReference type="NCBI Taxonomy" id="391896"/>
    <lineage>
        <taxon>Bacteria</taxon>
        <taxon>Pseudomonadati</taxon>
        <taxon>Pseudomonadota</taxon>
        <taxon>Alphaproteobacteria</taxon>
        <taxon>Rickettsiales</taxon>
        <taxon>Rickettsiaceae</taxon>
        <taxon>Rickettsieae</taxon>
        <taxon>Rickettsia</taxon>
        <taxon>belli group</taxon>
    </lineage>
</organism>
<keyword id="KW-0067">ATP-binding</keyword>
<keyword id="KW-0963">Cytoplasm</keyword>
<keyword id="KW-0418">Kinase</keyword>
<keyword id="KW-0520">NAD</keyword>
<keyword id="KW-0521">NADP</keyword>
<keyword id="KW-0547">Nucleotide-binding</keyword>
<keyword id="KW-0808">Transferase</keyword>
<accession>A8GUT7</accession>
<reference key="1">
    <citation type="submission" date="2007-09" db="EMBL/GenBank/DDBJ databases">
        <title>Complete genome sequencing of Rickettsia bellii.</title>
        <authorList>
            <person name="Madan A."/>
            <person name="Lee H."/>
            <person name="Madan A."/>
            <person name="Yoon J.-G."/>
            <person name="Ryu G.-Y."/>
            <person name="Dasch G."/>
            <person name="Ereemeva M."/>
        </authorList>
    </citation>
    <scope>NUCLEOTIDE SEQUENCE [LARGE SCALE GENOMIC DNA]</scope>
    <source>
        <strain>OSU 85-389</strain>
    </source>
</reference>
<gene>
    <name evidence="1" type="primary">nadK</name>
    <name type="ordered locus">A1I_01030</name>
</gene>